<sequence>MSRKYFGTDGIRGRVGEYPITPDFMLKLGWAAGMAFRKQGHCRVLVGKDTRISGYMFESALEAGLSAAGADVMLLGPMPTPAIAYLTRTFHAEAGIVISASHNPHDDNGIKFFSGQGTKLPDEVELMIEELLDQPMTVVESGKLGKVSRINDAAGRYIEFCKSSVPSSTSFEGLKLVVDCAHGATYKVAPSVFRELGADVTVLHAQPDGLNINEGCGSTHIESLQAAVLVGHADLGIAFDGDGDRVLMVDHTGAIVDGDELLFIIARDLQEHGKLQGGVVGTLMSNLGLELALKDLDIPFVRAKVGDRYVMAELLEREWLVGGENSGHVVCCNHTTTGDAIIAALQVLMALKRRGETLAQARQALRKCPQVLINVRFGASKVDPLEHPAVKEASAKVTEALAGRGRVLLRKSGTEPLVRVMVEGEDESQVRAHAEALAKLVGEVCV</sequence>
<evidence type="ECO:0000255" key="1">
    <source>
        <dbReference type="HAMAP-Rule" id="MF_01554"/>
    </source>
</evidence>
<comment type="function">
    <text evidence="1">Catalyzes the conversion of glucosamine-6-phosphate to glucosamine-1-phosphate.</text>
</comment>
<comment type="catalytic activity">
    <reaction evidence="1">
        <text>alpha-D-glucosamine 1-phosphate = D-glucosamine 6-phosphate</text>
        <dbReference type="Rhea" id="RHEA:23424"/>
        <dbReference type="ChEBI" id="CHEBI:58516"/>
        <dbReference type="ChEBI" id="CHEBI:58725"/>
        <dbReference type="EC" id="5.4.2.10"/>
    </reaction>
</comment>
<comment type="cofactor">
    <cofactor evidence="1">
        <name>Mg(2+)</name>
        <dbReference type="ChEBI" id="CHEBI:18420"/>
    </cofactor>
    <text evidence="1">Binds 1 Mg(2+) ion per subunit.</text>
</comment>
<comment type="PTM">
    <text evidence="1">Activated by phosphorylation.</text>
</comment>
<comment type="similarity">
    <text evidence="1">Belongs to the phosphohexose mutase family.</text>
</comment>
<keyword id="KW-0413">Isomerase</keyword>
<keyword id="KW-0460">Magnesium</keyword>
<keyword id="KW-0479">Metal-binding</keyword>
<keyword id="KW-0597">Phosphoprotein</keyword>
<keyword id="KW-1185">Reference proteome</keyword>
<reference key="1">
    <citation type="journal article" date="2002" name="Environ. Microbiol.">
        <title>Complete genome sequence and comparative analysis of the metabolically versatile Pseudomonas putida KT2440.</title>
        <authorList>
            <person name="Nelson K.E."/>
            <person name="Weinel C."/>
            <person name="Paulsen I.T."/>
            <person name="Dodson R.J."/>
            <person name="Hilbert H."/>
            <person name="Martins dos Santos V.A.P."/>
            <person name="Fouts D.E."/>
            <person name="Gill S.R."/>
            <person name="Pop M."/>
            <person name="Holmes M."/>
            <person name="Brinkac L.M."/>
            <person name="Beanan M.J."/>
            <person name="DeBoy R.T."/>
            <person name="Daugherty S.C."/>
            <person name="Kolonay J.F."/>
            <person name="Madupu R."/>
            <person name="Nelson W.C."/>
            <person name="White O."/>
            <person name="Peterson J.D."/>
            <person name="Khouri H.M."/>
            <person name="Hance I."/>
            <person name="Chris Lee P."/>
            <person name="Holtzapple E.K."/>
            <person name="Scanlan D."/>
            <person name="Tran K."/>
            <person name="Moazzez A."/>
            <person name="Utterback T.R."/>
            <person name="Rizzo M."/>
            <person name="Lee K."/>
            <person name="Kosack D."/>
            <person name="Moestl D."/>
            <person name="Wedler H."/>
            <person name="Lauber J."/>
            <person name="Stjepandic D."/>
            <person name="Hoheisel J."/>
            <person name="Straetz M."/>
            <person name="Heim S."/>
            <person name="Kiewitz C."/>
            <person name="Eisen J.A."/>
            <person name="Timmis K.N."/>
            <person name="Duesterhoeft A."/>
            <person name="Tuemmler B."/>
            <person name="Fraser C.M."/>
        </authorList>
    </citation>
    <scope>NUCLEOTIDE SEQUENCE [LARGE SCALE GENOMIC DNA]</scope>
    <source>
        <strain>ATCC 47054 / DSM 6125 / CFBP 8728 / NCIMB 11950 / KT2440</strain>
    </source>
</reference>
<dbReference type="EC" id="5.4.2.10" evidence="1"/>
<dbReference type="EMBL" id="AE015451">
    <property type="protein sequence ID" value="AAN70288.1"/>
    <property type="molecule type" value="Genomic_DNA"/>
</dbReference>
<dbReference type="RefSeq" id="NP_746824.1">
    <property type="nucleotide sequence ID" value="NC_002947.4"/>
</dbReference>
<dbReference type="RefSeq" id="WP_010955358.1">
    <property type="nucleotide sequence ID" value="NZ_CP169744.1"/>
</dbReference>
<dbReference type="SMR" id="Q88DV3"/>
<dbReference type="STRING" id="160488.PP_4716"/>
<dbReference type="PaxDb" id="160488-PP_4716"/>
<dbReference type="GeneID" id="83682433"/>
<dbReference type="KEGG" id="ppu:PP_4716"/>
<dbReference type="PATRIC" id="fig|160488.4.peg.5027"/>
<dbReference type="eggNOG" id="COG1109">
    <property type="taxonomic scope" value="Bacteria"/>
</dbReference>
<dbReference type="HOGENOM" id="CLU_016950_7_0_6"/>
<dbReference type="OrthoDB" id="9803322at2"/>
<dbReference type="PhylomeDB" id="Q88DV3"/>
<dbReference type="BioCyc" id="PPUT160488:G1G01-5042-MONOMER"/>
<dbReference type="Proteomes" id="UP000000556">
    <property type="component" value="Chromosome"/>
</dbReference>
<dbReference type="GO" id="GO:0005829">
    <property type="term" value="C:cytosol"/>
    <property type="evidence" value="ECO:0007669"/>
    <property type="project" value="TreeGrafter"/>
</dbReference>
<dbReference type="GO" id="GO:0000287">
    <property type="term" value="F:magnesium ion binding"/>
    <property type="evidence" value="ECO:0007669"/>
    <property type="project" value="UniProtKB-UniRule"/>
</dbReference>
<dbReference type="GO" id="GO:0008966">
    <property type="term" value="F:phosphoglucosamine mutase activity"/>
    <property type="evidence" value="ECO:0007669"/>
    <property type="project" value="UniProtKB-UniRule"/>
</dbReference>
<dbReference type="GO" id="GO:0004615">
    <property type="term" value="F:phosphomannomutase activity"/>
    <property type="evidence" value="ECO:0007669"/>
    <property type="project" value="TreeGrafter"/>
</dbReference>
<dbReference type="GO" id="GO:0005975">
    <property type="term" value="P:carbohydrate metabolic process"/>
    <property type="evidence" value="ECO:0007669"/>
    <property type="project" value="InterPro"/>
</dbReference>
<dbReference type="GO" id="GO:0009252">
    <property type="term" value="P:peptidoglycan biosynthetic process"/>
    <property type="evidence" value="ECO:0007669"/>
    <property type="project" value="TreeGrafter"/>
</dbReference>
<dbReference type="GO" id="GO:0006048">
    <property type="term" value="P:UDP-N-acetylglucosamine biosynthetic process"/>
    <property type="evidence" value="ECO:0007669"/>
    <property type="project" value="TreeGrafter"/>
</dbReference>
<dbReference type="CDD" id="cd05802">
    <property type="entry name" value="GlmM"/>
    <property type="match status" value="1"/>
</dbReference>
<dbReference type="FunFam" id="3.30.310.50:FF:000001">
    <property type="entry name" value="Phosphoglucosamine mutase"/>
    <property type="match status" value="1"/>
</dbReference>
<dbReference type="FunFam" id="3.40.120.10:FF:000001">
    <property type="entry name" value="Phosphoglucosamine mutase"/>
    <property type="match status" value="1"/>
</dbReference>
<dbReference type="FunFam" id="3.40.120.10:FF:000003">
    <property type="entry name" value="Phosphoglucosamine mutase"/>
    <property type="match status" value="1"/>
</dbReference>
<dbReference type="Gene3D" id="3.40.120.10">
    <property type="entry name" value="Alpha-D-Glucose-1,6-Bisphosphate, subunit A, domain 3"/>
    <property type="match status" value="3"/>
</dbReference>
<dbReference type="Gene3D" id="3.30.310.50">
    <property type="entry name" value="Alpha-D-phosphohexomutase, C-terminal domain"/>
    <property type="match status" value="1"/>
</dbReference>
<dbReference type="HAMAP" id="MF_01554_B">
    <property type="entry name" value="GlmM_B"/>
    <property type="match status" value="1"/>
</dbReference>
<dbReference type="InterPro" id="IPR005844">
    <property type="entry name" value="A-D-PHexomutase_a/b/a-I"/>
</dbReference>
<dbReference type="InterPro" id="IPR016055">
    <property type="entry name" value="A-D-PHexomutase_a/b/a-I/II/III"/>
</dbReference>
<dbReference type="InterPro" id="IPR005845">
    <property type="entry name" value="A-D-PHexomutase_a/b/a-II"/>
</dbReference>
<dbReference type="InterPro" id="IPR005846">
    <property type="entry name" value="A-D-PHexomutase_a/b/a-III"/>
</dbReference>
<dbReference type="InterPro" id="IPR005843">
    <property type="entry name" value="A-D-PHexomutase_C"/>
</dbReference>
<dbReference type="InterPro" id="IPR036900">
    <property type="entry name" value="A-D-PHexomutase_C_sf"/>
</dbReference>
<dbReference type="InterPro" id="IPR016066">
    <property type="entry name" value="A-D-PHexomutase_CS"/>
</dbReference>
<dbReference type="InterPro" id="IPR005841">
    <property type="entry name" value="Alpha-D-phosphohexomutase_SF"/>
</dbReference>
<dbReference type="InterPro" id="IPR006352">
    <property type="entry name" value="GlmM_bact"/>
</dbReference>
<dbReference type="InterPro" id="IPR050060">
    <property type="entry name" value="Phosphoglucosamine_mutase"/>
</dbReference>
<dbReference type="NCBIfam" id="TIGR01455">
    <property type="entry name" value="glmM"/>
    <property type="match status" value="1"/>
</dbReference>
<dbReference type="NCBIfam" id="NF008139">
    <property type="entry name" value="PRK10887.1"/>
    <property type="match status" value="1"/>
</dbReference>
<dbReference type="PANTHER" id="PTHR42946:SF1">
    <property type="entry name" value="PHOSPHOGLUCOMUTASE (ALPHA-D-GLUCOSE-1,6-BISPHOSPHATE-DEPENDENT)"/>
    <property type="match status" value="1"/>
</dbReference>
<dbReference type="PANTHER" id="PTHR42946">
    <property type="entry name" value="PHOSPHOHEXOSE MUTASE"/>
    <property type="match status" value="1"/>
</dbReference>
<dbReference type="Pfam" id="PF02878">
    <property type="entry name" value="PGM_PMM_I"/>
    <property type="match status" value="1"/>
</dbReference>
<dbReference type="Pfam" id="PF02879">
    <property type="entry name" value="PGM_PMM_II"/>
    <property type="match status" value="1"/>
</dbReference>
<dbReference type="Pfam" id="PF02880">
    <property type="entry name" value="PGM_PMM_III"/>
    <property type="match status" value="1"/>
</dbReference>
<dbReference type="Pfam" id="PF00408">
    <property type="entry name" value="PGM_PMM_IV"/>
    <property type="match status" value="1"/>
</dbReference>
<dbReference type="PRINTS" id="PR00509">
    <property type="entry name" value="PGMPMM"/>
</dbReference>
<dbReference type="SUPFAM" id="SSF55957">
    <property type="entry name" value="Phosphoglucomutase, C-terminal domain"/>
    <property type="match status" value="1"/>
</dbReference>
<dbReference type="SUPFAM" id="SSF53738">
    <property type="entry name" value="Phosphoglucomutase, first 3 domains"/>
    <property type="match status" value="3"/>
</dbReference>
<dbReference type="PROSITE" id="PS00710">
    <property type="entry name" value="PGM_PMM"/>
    <property type="match status" value="1"/>
</dbReference>
<accession>Q88DV3</accession>
<organism>
    <name type="scientific">Pseudomonas putida (strain ATCC 47054 / DSM 6125 / CFBP 8728 / NCIMB 11950 / KT2440)</name>
    <dbReference type="NCBI Taxonomy" id="160488"/>
    <lineage>
        <taxon>Bacteria</taxon>
        <taxon>Pseudomonadati</taxon>
        <taxon>Pseudomonadota</taxon>
        <taxon>Gammaproteobacteria</taxon>
        <taxon>Pseudomonadales</taxon>
        <taxon>Pseudomonadaceae</taxon>
        <taxon>Pseudomonas</taxon>
    </lineage>
</organism>
<proteinExistence type="inferred from homology"/>
<feature type="chain" id="PRO_0000147940" description="Phosphoglucosamine mutase">
    <location>
        <begin position="1"/>
        <end position="446"/>
    </location>
</feature>
<feature type="active site" description="Phosphoserine intermediate" evidence="1">
    <location>
        <position position="101"/>
    </location>
</feature>
<feature type="binding site" description="via phosphate group" evidence="1">
    <location>
        <position position="101"/>
    </location>
    <ligand>
        <name>Mg(2+)</name>
        <dbReference type="ChEBI" id="CHEBI:18420"/>
    </ligand>
</feature>
<feature type="binding site" evidence="1">
    <location>
        <position position="240"/>
    </location>
    <ligand>
        <name>Mg(2+)</name>
        <dbReference type="ChEBI" id="CHEBI:18420"/>
    </ligand>
</feature>
<feature type="binding site" evidence="1">
    <location>
        <position position="242"/>
    </location>
    <ligand>
        <name>Mg(2+)</name>
        <dbReference type="ChEBI" id="CHEBI:18420"/>
    </ligand>
</feature>
<feature type="binding site" evidence="1">
    <location>
        <position position="244"/>
    </location>
    <ligand>
        <name>Mg(2+)</name>
        <dbReference type="ChEBI" id="CHEBI:18420"/>
    </ligand>
</feature>
<feature type="modified residue" description="Phosphoserine" evidence="1">
    <location>
        <position position="101"/>
    </location>
</feature>
<gene>
    <name evidence="1" type="primary">glmM</name>
    <name type="ordered locus">PP_4716</name>
</gene>
<protein>
    <recommendedName>
        <fullName evidence="1">Phosphoglucosamine mutase</fullName>
        <ecNumber evidence="1">5.4.2.10</ecNumber>
    </recommendedName>
</protein>
<name>GLMM_PSEPK</name>